<reference evidence="5 6" key="1">
    <citation type="journal article" date="2008" name="Phytochemistry">
        <title>The alpine violet, Viola biflora, is a rich source of cyclotides with potent cytotoxicity.</title>
        <authorList>
            <person name="Herrmann A."/>
            <person name="Burman R."/>
            <person name="Mylne J.S."/>
            <person name="Karlsson G."/>
            <person name="Gullbo J."/>
            <person name="Craik D.J."/>
            <person name="Clark R.J."/>
            <person name="Goeransson U."/>
        </authorList>
    </citation>
    <scope>NUCLEOTIDE SEQUENCE [MRNA]</scope>
    <scope>PROTEIN SEQUENCE OF 70-99</scope>
    <scope>MASS SPECTROMETRY</scope>
    <source>
        <tissue evidence="4">Leaf</tissue>
    </source>
</reference>
<evidence type="ECO:0000250" key="1">
    <source>
        <dbReference type="UniProtKB" id="P56871"/>
    </source>
</evidence>
<evidence type="ECO:0000250" key="2">
    <source>
        <dbReference type="UniProtKB" id="Q5USN8"/>
    </source>
</evidence>
<evidence type="ECO:0000255" key="3">
    <source>
        <dbReference type="PROSITE-ProRule" id="PRU00395"/>
    </source>
</evidence>
<evidence type="ECO:0000269" key="4">
    <source>
    </source>
</evidence>
<evidence type="ECO:0000305" key="5"/>
<evidence type="ECO:0000312" key="6">
    <source>
        <dbReference type="EMBL" id="ABW08094.1"/>
    </source>
</evidence>
<accession>B1NRR2</accession>
<organism>
    <name type="scientific">Viola biflora</name>
    <name type="common">Yellow wood violet</name>
    <dbReference type="NCBI Taxonomy" id="214529"/>
    <lineage>
        <taxon>Eukaryota</taxon>
        <taxon>Viridiplantae</taxon>
        <taxon>Streptophyta</taxon>
        <taxon>Embryophyta</taxon>
        <taxon>Tracheophyta</taxon>
        <taxon>Spermatophyta</taxon>
        <taxon>Magnoliopsida</taxon>
        <taxon>eudicotyledons</taxon>
        <taxon>Gunneridae</taxon>
        <taxon>Pentapetalae</taxon>
        <taxon>rosids</taxon>
        <taxon>fabids</taxon>
        <taxon>Malpighiales</taxon>
        <taxon>Violaceae</taxon>
        <taxon>Viola</taxon>
        <taxon>Viola subgen. Viola</taxon>
        <taxon>Viola sect. Chamaemelanium</taxon>
    </lineage>
</organism>
<keyword id="KW-0903">Direct protein sequencing</keyword>
<keyword id="KW-1015">Disulfide bond</keyword>
<keyword id="KW-0960">Knottin</keyword>
<keyword id="KW-0611">Plant defense</keyword>
<keyword id="KW-0732">Signal</keyword>
<name>CYO9_VIOBI</name>
<feature type="signal peptide" evidence="2">
    <location>
        <begin position="1" status="less than"/>
        <end position="9"/>
    </location>
</feature>
<feature type="propeptide" id="PRO_0000341442" evidence="4">
    <location>
        <begin position="10"/>
        <end position="69"/>
    </location>
</feature>
<feature type="peptide" id="PRO_0000341443" description="Cycloviolacin-O9" evidence="3 4">
    <location>
        <begin position="70"/>
        <end position="99"/>
    </location>
</feature>
<feature type="propeptide" id="PRO_0000341444" evidence="4">
    <location>
        <begin position="100"/>
        <end position="103"/>
    </location>
</feature>
<feature type="disulfide bond" evidence="1 3">
    <location>
        <begin position="73"/>
        <end position="89"/>
    </location>
</feature>
<feature type="disulfide bond" evidence="1 3">
    <location>
        <begin position="77"/>
        <end position="91"/>
    </location>
</feature>
<feature type="disulfide bond" evidence="1 3">
    <location>
        <begin position="82"/>
        <end position="96"/>
    </location>
</feature>
<feature type="cross-link" description="Cyclopeptide (Gly-Asn)" evidence="4">
    <location>
        <begin position="70"/>
        <end position="99"/>
    </location>
</feature>
<feature type="non-terminal residue" evidence="6">
    <location>
        <position position="1"/>
    </location>
</feature>
<comment type="function">
    <text evidence="5">Probably participates in a plant defense mechanism.</text>
</comment>
<comment type="domain">
    <text evidence="1">The presence of a 'disulfide through disulfide knot' structurally defines this protein as a knottin.</text>
</comment>
<comment type="PTM">
    <text evidence="3 4">This is a cyclic peptide.</text>
</comment>
<comment type="mass spectrometry" mass="3140.0" method="Electrospray" evidence="4"/>
<comment type="similarity">
    <text evidence="3">Belongs to the cyclotide family. Bracelet subfamily.</text>
</comment>
<sequence length="103" mass="10997">AAFALPAFASFEKDVITPAALEAVLNRKAPLYNIMMENDAILNVIANVKTVISNPVLEEALLKTNHGVNGIPCGESCVWIPCLTSAVGCSCKSKVCYRNSLDN</sequence>
<protein>
    <recommendedName>
        <fullName>Cycloviolacin-O9</fullName>
    </recommendedName>
    <alternativeName>
        <fullName>Vbc5</fullName>
    </alternativeName>
</protein>
<proteinExistence type="evidence at protein level"/>
<dbReference type="EMBL" id="EU046622">
    <property type="protein sequence ID" value="ABW08094.1"/>
    <property type="molecule type" value="mRNA"/>
</dbReference>
<dbReference type="SMR" id="B1NRR2"/>
<dbReference type="GO" id="GO:0006952">
    <property type="term" value="P:defense response"/>
    <property type="evidence" value="ECO:0007669"/>
    <property type="project" value="UniProtKB-KW"/>
</dbReference>
<dbReference type="InterPro" id="IPR005535">
    <property type="entry name" value="Cyclotide"/>
</dbReference>
<dbReference type="InterPro" id="IPR012323">
    <property type="entry name" value="Cyclotide_bracelet_CS"/>
</dbReference>
<dbReference type="InterPro" id="IPR036146">
    <property type="entry name" value="Cyclotide_sf"/>
</dbReference>
<dbReference type="Pfam" id="PF03784">
    <property type="entry name" value="Cyclotide"/>
    <property type="match status" value="1"/>
</dbReference>
<dbReference type="SUPFAM" id="SSF57038">
    <property type="entry name" value="Cyclotides"/>
    <property type="match status" value="1"/>
</dbReference>
<dbReference type="PROSITE" id="PS51052">
    <property type="entry name" value="CYCLOTIDE"/>
    <property type="match status" value="1"/>
</dbReference>
<dbReference type="PROSITE" id="PS60008">
    <property type="entry name" value="CYCLOTIDE_BRACELET"/>
    <property type="match status" value="1"/>
</dbReference>